<keyword id="KW-0066">ATP synthesis</keyword>
<keyword id="KW-0067">ATP-binding</keyword>
<keyword id="KW-0139">CF(1)</keyword>
<keyword id="KW-0150">Chloroplast</keyword>
<keyword id="KW-0375">Hydrogen ion transport</keyword>
<keyword id="KW-0406">Ion transport</keyword>
<keyword id="KW-0472">Membrane</keyword>
<keyword id="KW-0547">Nucleotide-binding</keyword>
<keyword id="KW-0934">Plastid</keyword>
<keyword id="KW-0793">Thylakoid</keyword>
<keyword id="KW-1278">Translocase</keyword>
<keyword id="KW-0813">Transport</keyword>
<sequence length="496" mass="53453">MRINPTTSGPMISTLEEKNLGRIVQIIGPVLDALFPPGKMPNIYNALVVKGRAGQQINVTCEVQQLLGNNRVRAVAMSATDGLMRGMEVIDTGAPLSVPVGGATLGRIFNVLGEPVDNLGPVDTRTTSPIHRSAPAFIQLDTKLSIFETGIKVVDLLAPYRRGGKIGLFGGAGVGKTVLIMELINNIAKAHGGVSVFGGVGERTREGNDLYIEMKESGVINEKNIAESKVALVYGQMNEPPGARMRVGLTALTMAEYFRDVNEQDVLLFIDNIFRFVQAGSEVSALLGRMPSAVGYQPTLSTEMGSLQERITSTKEGSITSIQAVYVPADDLTDPAPATTFAHLDATTVLSRGLAAKGIYPAVDPLDSTSTMLQPGIVGEEHYETAQKVKQTSQRYKELQDIIAILGLDELSEEDRLTVARARKIERFLSQPFFVAEVFTGSPGKYVGLAETIRGFQLILSGELDSLPEQAFYLVGNIDEATAKAMNLEVENKLKK</sequence>
<accession>A6MML4</accession>
<comment type="function">
    <text evidence="1">Produces ATP from ADP in the presence of a proton gradient across the membrane. The catalytic sites are hosted primarily by the beta subunits.</text>
</comment>
<comment type="catalytic activity">
    <reaction evidence="1">
        <text>ATP + H2O + 4 H(+)(in) = ADP + phosphate + 5 H(+)(out)</text>
        <dbReference type="Rhea" id="RHEA:57720"/>
        <dbReference type="ChEBI" id="CHEBI:15377"/>
        <dbReference type="ChEBI" id="CHEBI:15378"/>
        <dbReference type="ChEBI" id="CHEBI:30616"/>
        <dbReference type="ChEBI" id="CHEBI:43474"/>
        <dbReference type="ChEBI" id="CHEBI:456216"/>
        <dbReference type="EC" id="7.1.2.2"/>
    </reaction>
</comment>
<comment type="subunit">
    <text evidence="1">F-type ATPases have 2 components, CF(1) - the catalytic core - and CF(0) - the membrane proton channel. CF(1) has five subunits: alpha(3), beta(3), gamma(1), delta(1), epsilon(1). CF(0) has four main subunits: a(1), b(1), b'(1) and c(9-12).</text>
</comment>
<comment type="subcellular location">
    <subcellularLocation>
        <location evidence="1">Plastid</location>
        <location evidence="1">Chloroplast thylakoid membrane</location>
        <topology evidence="1">Peripheral membrane protein</topology>
    </subcellularLocation>
</comment>
<comment type="similarity">
    <text evidence="1">Belongs to the ATPase alpha/beta chains family.</text>
</comment>
<evidence type="ECO:0000255" key="1">
    <source>
        <dbReference type="HAMAP-Rule" id="MF_01347"/>
    </source>
</evidence>
<feature type="chain" id="PRO_0000339618" description="ATP synthase subunit beta, chloroplastic">
    <location>
        <begin position="1"/>
        <end position="496"/>
    </location>
</feature>
<feature type="binding site" evidence="1">
    <location>
        <begin position="170"/>
        <end position="177"/>
    </location>
    <ligand>
        <name>ATP</name>
        <dbReference type="ChEBI" id="CHEBI:30616"/>
    </ligand>
</feature>
<geneLocation type="chloroplast"/>
<proteinExistence type="inferred from homology"/>
<reference key="1">
    <citation type="journal article" date="2007" name="Mol. Phylogenet. Evol.">
        <title>Phylogenetic and evolutionary implications of complete chloroplast genome sequences of four early-diverging angiosperms: Buxus (Buxaceae), Chloranthus (Chloranthaceae), Dioscorea (Dioscoreaceae), and Illicium (Schisandraceae).</title>
        <authorList>
            <person name="Hansen D.R."/>
            <person name="Dastidar S.G."/>
            <person name="Cai Z."/>
            <person name="Penaflor C."/>
            <person name="Kuehl J.V."/>
            <person name="Boore J.L."/>
            <person name="Jansen R.K."/>
        </authorList>
    </citation>
    <scope>NUCLEOTIDE SEQUENCE [LARGE SCALE GENOMIC DNA]</scope>
</reference>
<name>ATPB_DIOEL</name>
<organism>
    <name type="scientific">Dioscorea elephantipes</name>
    <name type="common">Elephant's foot yam</name>
    <name type="synonym">Testudinaria elephantipes</name>
    <dbReference type="NCBI Taxonomy" id="145284"/>
    <lineage>
        <taxon>Eukaryota</taxon>
        <taxon>Viridiplantae</taxon>
        <taxon>Streptophyta</taxon>
        <taxon>Embryophyta</taxon>
        <taxon>Tracheophyta</taxon>
        <taxon>Spermatophyta</taxon>
        <taxon>Magnoliopsida</taxon>
        <taxon>Liliopsida</taxon>
        <taxon>Dioscoreales</taxon>
        <taxon>Dioscoreaceae</taxon>
        <taxon>Dioscorea</taxon>
    </lineage>
</organism>
<dbReference type="EC" id="7.1.2.2" evidence="1"/>
<dbReference type="EMBL" id="EF380353">
    <property type="protein sequence ID" value="ABR01437.1"/>
    <property type="molecule type" value="Genomic_DNA"/>
</dbReference>
<dbReference type="RefSeq" id="YP_001294359.1">
    <property type="nucleotide sequence ID" value="NC_009601.1"/>
</dbReference>
<dbReference type="SMR" id="A6MML4"/>
<dbReference type="GeneID" id="5236623"/>
<dbReference type="GO" id="GO:0009535">
    <property type="term" value="C:chloroplast thylakoid membrane"/>
    <property type="evidence" value="ECO:0007669"/>
    <property type="project" value="UniProtKB-SubCell"/>
</dbReference>
<dbReference type="GO" id="GO:0005739">
    <property type="term" value="C:mitochondrion"/>
    <property type="evidence" value="ECO:0007669"/>
    <property type="project" value="GOC"/>
</dbReference>
<dbReference type="GO" id="GO:0045259">
    <property type="term" value="C:proton-transporting ATP synthase complex"/>
    <property type="evidence" value="ECO:0007669"/>
    <property type="project" value="UniProtKB-KW"/>
</dbReference>
<dbReference type="GO" id="GO:0005524">
    <property type="term" value="F:ATP binding"/>
    <property type="evidence" value="ECO:0007669"/>
    <property type="project" value="UniProtKB-UniRule"/>
</dbReference>
<dbReference type="GO" id="GO:0016887">
    <property type="term" value="F:ATP hydrolysis activity"/>
    <property type="evidence" value="ECO:0007669"/>
    <property type="project" value="InterPro"/>
</dbReference>
<dbReference type="GO" id="GO:0046933">
    <property type="term" value="F:proton-transporting ATP synthase activity, rotational mechanism"/>
    <property type="evidence" value="ECO:0007669"/>
    <property type="project" value="UniProtKB-UniRule"/>
</dbReference>
<dbReference type="GO" id="GO:0042776">
    <property type="term" value="P:proton motive force-driven mitochondrial ATP synthesis"/>
    <property type="evidence" value="ECO:0007669"/>
    <property type="project" value="TreeGrafter"/>
</dbReference>
<dbReference type="CDD" id="cd18110">
    <property type="entry name" value="ATP-synt_F1_beta_C"/>
    <property type="match status" value="1"/>
</dbReference>
<dbReference type="CDD" id="cd18115">
    <property type="entry name" value="ATP-synt_F1_beta_N"/>
    <property type="match status" value="1"/>
</dbReference>
<dbReference type="CDD" id="cd01133">
    <property type="entry name" value="F1-ATPase_beta_CD"/>
    <property type="match status" value="1"/>
</dbReference>
<dbReference type="FunFam" id="1.10.1140.10:FF:000001">
    <property type="entry name" value="ATP synthase subunit beta"/>
    <property type="match status" value="1"/>
</dbReference>
<dbReference type="FunFam" id="3.40.50.12240:FF:000006">
    <property type="entry name" value="ATP synthase subunit beta"/>
    <property type="match status" value="1"/>
</dbReference>
<dbReference type="FunFam" id="3.40.50.300:FF:000004">
    <property type="entry name" value="ATP synthase subunit beta"/>
    <property type="match status" value="1"/>
</dbReference>
<dbReference type="FunFam" id="2.40.10.170:FF:000002">
    <property type="entry name" value="ATP synthase subunit beta, chloroplastic"/>
    <property type="match status" value="1"/>
</dbReference>
<dbReference type="Gene3D" id="2.40.10.170">
    <property type="match status" value="1"/>
</dbReference>
<dbReference type="Gene3D" id="1.10.1140.10">
    <property type="entry name" value="Bovine Mitochondrial F1-atpase, Atp Synthase Beta Chain, Chain D, domain 3"/>
    <property type="match status" value="1"/>
</dbReference>
<dbReference type="Gene3D" id="3.40.50.300">
    <property type="entry name" value="P-loop containing nucleotide triphosphate hydrolases"/>
    <property type="match status" value="1"/>
</dbReference>
<dbReference type="HAMAP" id="MF_01347">
    <property type="entry name" value="ATP_synth_beta_bact"/>
    <property type="match status" value="1"/>
</dbReference>
<dbReference type="InterPro" id="IPR003593">
    <property type="entry name" value="AAA+_ATPase"/>
</dbReference>
<dbReference type="InterPro" id="IPR055190">
    <property type="entry name" value="ATP-synt_VA_C"/>
</dbReference>
<dbReference type="InterPro" id="IPR005722">
    <property type="entry name" value="ATP_synth_F1_bsu"/>
</dbReference>
<dbReference type="InterPro" id="IPR020003">
    <property type="entry name" value="ATPase_a/bsu_AS"/>
</dbReference>
<dbReference type="InterPro" id="IPR050053">
    <property type="entry name" value="ATPase_alpha/beta_chains"/>
</dbReference>
<dbReference type="InterPro" id="IPR004100">
    <property type="entry name" value="ATPase_F1/V1/A1_a/bsu_N"/>
</dbReference>
<dbReference type="InterPro" id="IPR036121">
    <property type="entry name" value="ATPase_F1/V1/A1_a/bsu_N_sf"/>
</dbReference>
<dbReference type="InterPro" id="IPR000194">
    <property type="entry name" value="ATPase_F1/V1/A1_a/bsu_nucl-bd"/>
</dbReference>
<dbReference type="InterPro" id="IPR024034">
    <property type="entry name" value="ATPase_F1/V1_b/a_C"/>
</dbReference>
<dbReference type="InterPro" id="IPR027417">
    <property type="entry name" value="P-loop_NTPase"/>
</dbReference>
<dbReference type="NCBIfam" id="TIGR01039">
    <property type="entry name" value="atpD"/>
    <property type="match status" value="1"/>
</dbReference>
<dbReference type="PANTHER" id="PTHR15184">
    <property type="entry name" value="ATP SYNTHASE"/>
    <property type="match status" value="1"/>
</dbReference>
<dbReference type="PANTHER" id="PTHR15184:SF71">
    <property type="entry name" value="ATP SYNTHASE SUBUNIT BETA, MITOCHONDRIAL"/>
    <property type="match status" value="1"/>
</dbReference>
<dbReference type="Pfam" id="PF00006">
    <property type="entry name" value="ATP-synt_ab"/>
    <property type="match status" value="1"/>
</dbReference>
<dbReference type="Pfam" id="PF02874">
    <property type="entry name" value="ATP-synt_ab_N"/>
    <property type="match status" value="1"/>
</dbReference>
<dbReference type="Pfam" id="PF22919">
    <property type="entry name" value="ATP-synt_VA_C"/>
    <property type="match status" value="1"/>
</dbReference>
<dbReference type="SMART" id="SM00382">
    <property type="entry name" value="AAA"/>
    <property type="match status" value="1"/>
</dbReference>
<dbReference type="SUPFAM" id="SSF47917">
    <property type="entry name" value="C-terminal domain of alpha and beta subunits of F1 ATP synthase"/>
    <property type="match status" value="1"/>
</dbReference>
<dbReference type="SUPFAM" id="SSF50615">
    <property type="entry name" value="N-terminal domain of alpha and beta subunits of F1 ATP synthase"/>
    <property type="match status" value="1"/>
</dbReference>
<dbReference type="SUPFAM" id="SSF52540">
    <property type="entry name" value="P-loop containing nucleoside triphosphate hydrolases"/>
    <property type="match status" value="1"/>
</dbReference>
<dbReference type="PROSITE" id="PS00152">
    <property type="entry name" value="ATPASE_ALPHA_BETA"/>
    <property type="match status" value="1"/>
</dbReference>
<protein>
    <recommendedName>
        <fullName evidence="1">ATP synthase subunit beta, chloroplastic</fullName>
        <ecNumber evidence="1">7.1.2.2</ecNumber>
    </recommendedName>
    <alternativeName>
        <fullName evidence="1">ATP synthase F1 sector subunit beta</fullName>
    </alternativeName>
    <alternativeName>
        <fullName evidence="1">F-ATPase subunit beta</fullName>
    </alternativeName>
</protein>
<gene>
    <name evidence="1" type="primary">atpB</name>
</gene>